<reference key="1">
    <citation type="journal article" date="1998" name="Nature">
        <title>The complete genome of the hyperthermophilic bacterium Aquifex aeolicus.</title>
        <authorList>
            <person name="Deckert G."/>
            <person name="Warren P.V."/>
            <person name="Gaasterland T."/>
            <person name="Young W.G."/>
            <person name="Lenox A.L."/>
            <person name="Graham D.E."/>
            <person name="Overbeek R."/>
            <person name="Snead M.A."/>
            <person name="Keller M."/>
            <person name="Aujay M."/>
            <person name="Huber R."/>
            <person name="Feldman R.A."/>
            <person name="Short J.M."/>
            <person name="Olsen G.J."/>
            <person name="Swanson R.V."/>
        </authorList>
    </citation>
    <scope>NUCLEOTIDE SEQUENCE [LARGE SCALE GENOMIC DNA]</scope>
    <source>
        <strain>VF5</strain>
    </source>
</reference>
<evidence type="ECO:0000255" key="1">
    <source>
        <dbReference type="HAMAP-Rule" id="MF_01929"/>
    </source>
</evidence>
<proteinExistence type="inferred from homology"/>
<organism>
    <name type="scientific">Aquifex aeolicus (strain VF5)</name>
    <dbReference type="NCBI Taxonomy" id="224324"/>
    <lineage>
        <taxon>Bacteria</taxon>
        <taxon>Pseudomonadati</taxon>
        <taxon>Aquificota</taxon>
        <taxon>Aquificia</taxon>
        <taxon>Aquificales</taxon>
        <taxon>Aquificaceae</taxon>
        <taxon>Aquifex</taxon>
    </lineage>
</organism>
<keyword id="KW-0413">Isomerase</keyword>
<keyword id="KW-0658">Purine biosynthesis</keyword>
<keyword id="KW-1185">Reference proteome</keyword>
<gene>
    <name evidence="1" type="primary">purE</name>
    <name type="ordered locus">aq_1178</name>
</gene>
<accession>O67239</accession>
<dbReference type="EC" id="5.4.99.18" evidence="1"/>
<dbReference type="EMBL" id="AE000657">
    <property type="protein sequence ID" value="AAC07201.1"/>
    <property type="molecule type" value="Genomic_DNA"/>
</dbReference>
<dbReference type="PIR" id="D70401">
    <property type="entry name" value="D70401"/>
</dbReference>
<dbReference type="RefSeq" id="NP_213803.1">
    <property type="nucleotide sequence ID" value="NC_000918.1"/>
</dbReference>
<dbReference type="RefSeq" id="WP_010880741.1">
    <property type="nucleotide sequence ID" value="NC_000918.1"/>
</dbReference>
<dbReference type="SMR" id="O67239"/>
<dbReference type="FunCoup" id="O67239">
    <property type="interactions" value="371"/>
</dbReference>
<dbReference type="STRING" id="224324.aq_1178"/>
<dbReference type="EnsemblBacteria" id="AAC07201">
    <property type="protein sequence ID" value="AAC07201"/>
    <property type="gene ID" value="aq_1178"/>
</dbReference>
<dbReference type="KEGG" id="aae:aq_1178"/>
<dbReference type="PATRIC" id="fig|224324.8.peg.916"/>
<dbReference type="eggNOG" id="COG0041">
    <property type="taxonomic scope" value="Bacteria"/>
</dbReference>
<dbReference type="HOGENOM" id="CLU_094982_2_0_0"/>
<dbReference type="InParanoid" id="O67239"/>
<dbReference type="OrthoDB" id="9791908at2"/>
<dbReference type="UniPathway" id="UPA00074">
    <property type="reaction ID" value="UER00943"/>
</dbReference>
<dbReference type="Proteomes" id="UP000000798">
    <property type="component" value="Chromosome"/>
</dbReference>
<dbReference type="GO" id="GO:0034023">
    <property type="term" value="F:5-(carboxyamino)imidazole ribonucleotide mutase activity"/>
    <property type="evidence" value="ECO:0007669"/>
    <property type="project" value="UniProtKB-UniRule"/>
</dbReference>
<dbReference type="GO" id="GO:0006189">
    <property type="term" value="P:'de novo' IMP biosynthetic process"/>
    <property type="evidence" value="ECO:0007669"/>
    <property type="project" value="UniProtKB-UniRule"/>
</dbReference>
<dbReference type="Gene3D" id="3.40.50.1970">
    <property type="match status" value="1"/>
</dbReference>
<dbReference type="HAMAP" id="MF_01929">
    <property type="entry name" value="PurE_classI"/>
    <property type="match status" value="1"/>
</dbReference>
<dbReference type="InterPro" id="IPR033747">
    <property type="entry name" value="PurE_ClassI"/>
</dbReference>
<dbReference type="InterPro" id="IPR000031">
    <property type="entry name" value="PurE_dom"/>
</dbReference>
<dbReference type="InterPro" id="IPR024694">
    <property type="entry name" value="PurE_prokaryotes"/>
</dbReference>
<dbReference type="NCBIfam" id="TIGR01162">
    <property type="entry name" value="purE"/>
    <property type="match status" value="1"/>
</dbReference>
<dbReference type="PANTHER" id="PTHR23046:SF2">
    <property type="entry name" value="PHOSPHORIBOSYLAMINOIMIDAZOLE CARBOXYLASE"/>
    <property type="match status" value="1"/>
</dbReference>
<dbReference type="PANTHER" id="PTHR23046">
    <property type="entry name" value="PHOSPHORIBOSYLAMINOIMIDAZOLE CARBOXYLASE CATALYTIC SUBUNIT"/>
    <property type="match status" value="1"/>
</dbReference>
<dbReference type="Pfam" id="PF00731">
    <property type="entry name" value="AIRC"/>
    <property type="match status" value="1"/>
</dbReference>
<dbReference type="PIRSF" id="PIRSF001338">
    <property type="entry name" value="AIR_carboxylase"/>
    <property type="match status" value="1"/>
</dbReference>
<dbReference type="SMART" id="SM01001">
    <property type="entry name" value="AIRC"/>
    <property type="match status" value="1"/>
</dbReference>
<dbReference type="SUPFAM" id="SSF52255">
    <property type="entry name" value="N5-CAIR mutase (phosphoribosylaminoimidazole carboxylase, PurE)"/>
    <property type="match status" value="1"/>
</dbReference>
<name>PURE_AQUAE</name>
<protein>
    <recommendedName>
        <fullName evidence="1">N5-carboxyaminoimidazole ribonucleotide mutase</fullName>
        <shortName evidence="1">N5-CAIR mutase</shortName>
        <ecNumber evidence="1">5.4.99.18</ecNumber>
    </recommendedName>
    <alternativeName>
        <fullName evidence="1">5-(carboxyamino)imidazole ribonucleotide mutase</fullName>
    </alternativeName>
</protein>
<sequence>MKPLVGVIMGSISDWEYMKKAVEVLKEFGVPHEVKVVSAHRTPELMYEYAKTARERGIEVIIAGAGGSAHLPGMTASMTTLPVIGVPIPTKNLGGVDSLYSIVQMPAGIPVATVAIGNATNAGLLAVRILSIKYPEYAKKLDEYTEKLKEKVAKMNEELQKEVENGI</sequence>
<comment type="function">
    <text evidence="1">Catalyzes the conversion of N5-carboxyaminoimidazole ribonucleotide (N5-CAIR) to 4-carboxy-5-aminoimidazole ribonucleotide (CAIR).</text>
</comment>
<comment type="catalytic activity">
    <reaction evidence="1">
        <text>5-carboxyamino-1-(5-phospho-D-ribosyl)imidazole + H(+) = 5-amino-1-(5-phospho-D-ribosyl)imidazole-4-carboxylate</text>
        <dbReference type="Rhea" id="RHEA:13193"/>
        <dbReference type="ChEBI" id="CHEBI:15378"/>
        <dbReference type="ChEBI" id="CHEBI:58730"/>
        <dbReference type="ChEBI" id="CHEBI:77657"/>
        <dbReference type="EC" id="5.4.99.18"/>
    </reaction>
</comment>
<comment type="pathway">
    <text evidence="1">Purine metabolism; IMP biosynthesis via de novo pathway; 5-amino-1-(5-phospho-D-ribosyl)imidazole-4-carboxylate from 5-amino-1-(5-phospho-D-ribosyl)imidazole (N5-CAIR route): step 2/2.</text>
</comment>
<comment type="similarity">
    <text evidence="1">Belongs to the AIR carboxylase family. Class I subfamily.</text>
</comment>
<feature type="chain" id="PRO_0000074968" description="N5-carboxyaminoimidazole ribonucleotide mutase">
    <location>
        <begin position="1"/>
        <end position="167"/>
    </location>
</feature>
<feature type="binding site" evidence="1">
    <location>
        <position position="11"/>
    </location>
    <ligand>
        <name>substrate</name>
    </ligand>
</feature>
<feature type="binding site" evidence="1">
    <location>
        <position position="14"/>
    </location>
    <ligand>
        <name>substrate</name>
    </ligand>
</feature>
<feature type="binding site" evidence="1">
    <location>
        <position position="41"/>
    </location>
    <ligand>
        <name>substrate</name>
    </ligand>
</feature>